<gene>
    <name evidence="1" type="primary">rpmI</name>
    <name type="ordered locus">Smed_3484</name>
</gene>
<evidence type="ECO:0000255" key="1">
    <source>
        <dbReference type="HAMAP-Rule" id="MF_00514"/>
    </source>
</evidence>
<evidence type="ECO:0000305" key="2"/>
<comment type="similarity">
    <text evidence="1">Belongs to the bacterial ribosomal protein bL35 family.</text>
</comment>
<organism>
    <name type="scientific">Sinorhizobium medicae (strain WSM419)</name>
    <name type="common">Ensifer medicae</name>
    <dbReference type="NCBI Taxonomy" id="366394"/>
    <lineage>
        <taxon>Bacteria</taxon>
        <taxon>Pseudomonadati</taxon>
        <taxon>Pseudomonadota</taxon>
        <taxon>Alphaproteobacteria</taxon>
        <taxon>Hyphomicrobiales</taxon>
        <taxon>Rhizobiaceae</taxon>
        <taxon>Sinorhizobium/Ensifer group</taxon>
        <taxon>Sinorhizobium</taxon>
    </lineage>
</organism>
<accession>A6UF72</accession>
<sequence>MPKMKTKSSAKKRFKITATGKVRAAAAGKRHGMIKRSNKFIRDARGTMVLAEPDGKKVVKNYLPNGL</sequence>
<protein>
    <recommendedName>
        <fullName evidence="1">Large ribosomal subunit protein bL35</fullName>
    </recommendedName>
    <alternativeName>
        <fullName evidence="2">50S ribosomal protein L35</fullName>
    </alternativeName>
</protein>
<keyword id="KW-0687">Ribonucleoprotein</keyword>
<keyword id="KW-0689">Ribosomal protein</keyword>
<proteinExistence type="inferred from homology"/>
<dbReference type="EMBL" id="CP000738">
    <property type="protein sequence ID" value="ABR62302.1"/>
    <property type="molecule type" value="Genomic_DNA"/>
</dbReference>
<dbReference type="RefSeq" id="WP_004435490.1">
    <property type="nucleotide sequence ID" value="NC_009636.1"/>
</dbReference>
<dbReference type="RefSeq" id="YP_001329137.1">
    <property type="nucleotide sequence ID" value="NC_009636.1"/>
</dbReference>
<dbReference type="SMR" id="A6UF72"/>
<dbReference type="STRING" id="366394.Smed_3484"/>
<dbReference type="GeneID" id="89574609"/>
<dbReference type="KEGG" id="smd:Smed_3484"/>
<dbReference type="PATRIC" id="fig|366394.8.peg.6735"/>
<dbReference type="eggNOG" id="COG0291">
    <property type="taxonomic scope" value="Bacteria"/>
</dbReference>
<dbReference type="HOGENOM" id="CLU_169643_2_1_5"/>
<dbReference type="OrthoDB" id="9804851at2"/>
<dbReference type="Proteomes" id="UP000001108">
    <property type="component" value="Chromosome"/>
</dbReference>
<dbReference type="GO" id="GO:1990904">
    <property type="term" value="C:ribonucleoprotein complex"/>
    <property type="evidence" value="ECO:0007669"/>
    <property type="project" value="UniProtKB-KW"/>
</dbReference>
<dbReference type="GO" id="GO:0005840">
    <property type="term" value="C:ribosome"/>
    <property type="evidence" value="ECO:0007669"/>
    <property type="project" value="UniProtKB-KW"/>
</dbReference>
<dbReference type="GO" id="GO:0003735">
    <property type="term" value="F:structural constituent of ribosome"/>
    <property type="evidence" value="ECO:0007669"/>
    <property type="project" value="InterPro"/>
</dbReference>
<dbReference type="GO" id="GO:0006412">
    <property type="term" value="P:translation"/>
    <property type="evidence" value="ECO:0007669"/>
    <property type="project" value="UniProtKB-UniRule"/>
</dbReference>
<dbReference type="FunFam" id="4.10.410.60:FF:000001">
    <property type="entry name" value="50S ribosomal protein L35"/>
    <property type="match status" value="1"/>
</dbReference>
<dbReference type="Gene3D" id="4.10.410.60">
    <property type="match status" value="1"/>
</dbReference>
<dbReference type="HAMAP" id="MF_00514">
    <property type="entry name" value="Ribosomal_bL35"/>
    <property type="match status" value="1"/>
</dbReference>
<dbReference type="InterPro" id="IPR001706">
    <property type="entry name" value="Ribosomal_bL35"/>
</dbReference>
<dbReference type="InterPro" id="IPR021137">
    <property type="entry name" value="Ribosomal_bL35-like"/>
</dbReference>
<dbReference type="InterPro" id="IPR018265">
    <property type="entry name" value="Ribosomal_bL35_CS"/>
</dbReference>
<dbReference type="InterPro" id="IPR037229">
    <property type="entry name" value="Ribosomal_bL35_sf"/>
</dbReference>
<dbReference type="NCBIfam" id="TIGR00001">
    <property type="entry name" value="rpmI_bact"/>
    <property type="match status" value="1"/>
</dbReference>
<dbReference type="Pfam" id="PF01632">
    <property type="entry name" value="Ribosomal_L35p"/>
    <property type="match status" value="1"/>
</dbReference>
<dbReference type="PRINTS" id="PR00064">
    <property type="entry name" value="RIBOSOMALL35"/>
</dbReference>
<dbReference type="SUPFAM" id="SSF143034">
    <property type="entry name" value="L35p-like"/>
    <property type="match status" value="1"/>
</dbReference>
<dbReference type="PROSITE" id="PS00936">
    <property type="entry name" value="RIBOSOMAL_L35"/>
    <property type="match status" value="1"/>
</dbReference>
<feature type="chain" id="PRO_1000050769" description="Large ribosomal subunit protein bL35">
    <location>
        <begin position="1"/>
        <end position="67"/>
    </location>
</feature>
<reference key="1">
    <citation type="submission" date="2007-06" db="EMBL/GenBank/DDBJ databases">
        <title>Complete sequence of Sinorhizobium medicae WSM419 chromosome.</title>
        <authorList>
            <consortium name="US DOE Joint Genome Institute"/>
            <person name="Copeland A."/>
            <person name="Lucas S."/>
            <person name="Lapidus A."/>
            <person name="Barry K."/>
            <person name="Glavina del Rio T."/>
            <person name="Dalin E."/>
            <person name="Tice H."/>
            <person name="Pitluck S."/>
            <person name="Chain P."/>
            <person name="Malfatti S."/>
            <person name="Shin M."/>
            <person name="Vergez L."/>
            <person name="Schmutz J."/>
            <person name="Larimer F."/>
            <person name="Land M."/>
            <person name="Hauser L."/>
            <person name="Kyrpides N."/>
            <person name="Mikhailova N."/>
            <person name="Reeve W.G."/>
            <person name="Richardson P."/>
        </authorList>
    </citation>
    <scope>NUCLEOTIDE SEQUENCE [LARGE SCALE GENOMIC DNA]</scope>
    <source>
        <strain>WSM419</strain>
    </source>
</reference>
<name>RL35_SINMW</name>